<name>RPOZ_PROMP</name>
<evidence type="ECO:0000255" key="1">
    <source>
        <dbReference type="HAMAP-Rule" id="MF_00366"/>
    </source>
</evidence>
<sequence>MNVSNNSNMDHNDLAKRGESLIRKSTNRYLTTVRIAFRAKQRRFDDFDGLLEESAIKPVQRSIIELSDEQDQPDLLPG</sequence>
<feature type="chain" id="PRO_0000128962" description="DNA-directed RNA polymerase subunit omega">
    <location>
        <begin position="1"/>
        <end position="78"/>
    </location>
</feature>
<accession>Q7V054</accession>
<dbReference type="EC" id="2.7.7.6" evidence="1"/>
<dbReference type="EMBL" id="BX548174">
    <property type="protein sequence ID" value="CAE19890.1"/>
    <property type="molecule type" value="Genomic_DNA"/>
</dbReference>
<dbReference type="RefSeq" id="WP_011133060.1">
    <property type="nucleotide sequence ID" value="NC_005072.1"/>
</dbReference>
<dbReference type="SMR" id="Q7V054"/>
<dbReference type="STRING" id="59919.PMM1431"/>
<dbReference type="KEGG" id="pmm:PMM1431"/>
<dbReference type="eggNOG" id="ENOG5032RMS">
    <property type="taxonomic scope" value="Bacteria"/>
</dbReference>
<dbReference type="HOGENOM" id="CLU_175526_0_0_3"/>
<dbReference type="OrthoDB" id="463386at2"/>
<dbReference type="Proteomes" id="UP000001026">
    <property type="component" value="Chromosome"/>
</dbReference>
<dbReference type="GO" id="GO:0000428">
    <property type="term" value="C:DNA-directed RNA polymerase complex"/>
    <property type="evidence" value="ECO:0007669"/>
    <property type="project" value="UniProtKB-KW"/>
</dbReference>
<dbReference type="GO" id="GO:0003677">
    <property type="term" value="F:DNA binding"/>
    <property type="evidence" value="ECO:0007669"/>
    <property type="project" value="UniProtKB-UniRule"/>
</dbReference>
<dbReference type="GO" id="GO:0003899">
    <property type="term" value="F:DNA-directed RNA polymerase activity"/>
    <property type="evidence" value="ECO:0007669"/>
    <property type="project" value="UniProtKB-UniRule"/>
</dbReference>
<dbReference type="GO" id="GO:0006351">
    <property type="term" value="P:DNA-templated transcription"/>
    <property type="evidence" value="ECO:0007669"/>
    <property type="project" value="UniProtKB-UniRule"/>
</dbReference>
<dbReference type="HAMAP" id="MF_00366">
    <property type="entry name" value="RNApol_bact_RpoZ"/>
    <property type="match status" value="1"/>
</dbReference>
<dbReference type="InterPro" id="IPR003716">
    <property type="entry name" value="DNA-dir_RNA_pol_omega"/>
</dbReference>
<dbReference type="InterPro" id="IPR006110">
    <property type="entry name" value="Pol_omega/Rpo6/RPB6"/>
</dbReference>
<dbReference type="NCBIfam" id="NF001574">
    <property type="entry name" value="PRK00392.2-5"/>
    <property type="match status" value="1"/>
</dbReference>
<dbReference type="Pfam" id="PF01192">
    <property type="entry name" value="RNA_pol_Rpb6"/>
    <property type="match status" value="1"/>
</dbReference>
<organism>
    <name type="scientific">Prochlorococcus marinus subsp. pastoris (strain CCMP1986 / NIES-2087 / MED4)</name>
    <dbReference type="NCBI Taxonomy" id="59919"/>
    <lineage>
        <taxon>Bacteria</taxon>
        <taxon>Bacillati</taxon>
        <taxon>Cyanobacteriota</taxon>
        <taxon>Cyanophyceae</taxon>
        <taxon>Synechococcales</taxon>
        <taxon>Prochlorococcaceae</taxon>
        <taxon>Prochlorococcus</taxon>
    </lineage>
</organism>
<keyword id="KW-0240">DNA-directed RNA polymerase</keyword>
<keyword id="KW-0548">Nucleotidyltransferase</keyword>
<keyword id="KW-0804">Transcription</keyword>
<keyword id="KW-0808">Transferase</keyword>
<gene>
    <name evidence="1" type="primary">rpoZ</name>
    <name type="ordered locus">PMM1431</name>
</gene>
<comment type="function">
    <text evidence="1">Promotes RNA polymerase assembly. Latches the N- and C-terminal regions of the beta' subunit thereby facilitating its interaction with the beta and alpha subunits.</text>
</comment>
<comment type="catalytic activity">
    <reaction evidence="1">
        <text>RNA(n) + a ribonucleoside 5'-triphosphate = RNA(n+1) + diphosphate</text>
        <dbReference type="Rhea" id="RHEA:21248"/>
        <dbReference type="Rhea" id="RHEA-COMP:14527"/>
        <dbReference type="Rhea" id="RHEA-COMP:17342"/>
        <dbReference type="ChEBI" id="CHEBI:33019"/>
        <dbReference type="ChEBI" id="CHEBI:61557"/>
        <dbReference type="ChEBI" id="CHEBI:140395"/>
        <dbReference type="EC" id="2.7.7.6"/>
    </reaction>
</comment>
<comment type="subunit">
    <text evidence="1">In cyanobacteria the RNAP catalytic core is composed of 2 alpha, 1 beta, 1 beta', 1 gamma and 1 omega subunit. When a sigma factor is associated with the core the holoenzyme is formed, which can initiate transcription.</text>
</comment>
<comment type="similarity">
    <text evidence="1">Belongs to the RNA polymerase subunit omega family.</text>
</comment>
<protein>
    <recommendedName>
        <fullName evidence="1">DNA-directed RNA polymerase subunit omega</fullName>
        <shortName evidence="1">RNAP omega subunit</shortName>
        <ecNumber evidence="1">2.7.7.6</ecNumber>
    </recommendedName>
    <alternativeName>
        <fullName evidence="1">RNA polymerase omega subunit</fullName>
    </alternativeName>
    <alternativeName>
        <fullName evidence="1">Transcriptase subunit omega</fullName>
    </alternativeName>
</protein>
<reference key="1">
    <citation type="journal article" date="2003" name="Nature">
        <title>Genome divergence in two Prochlorococcus ecotypes reflects oceanic niche differentiation.</title>
        <authorList>
            <person name="Rocap G."/>
            <person name="Larimer F.W."/>
            <person name="Lamerdin J.E."/>
            <person name="Malfatti S."/>
            <person name="Chain P."/>
            <person name="Ahlgren N.A."/>
            <person name="Arellano A."/>
            <person name="Coleman M."/>
            <person name="Hauser L."/>
            <person name="Hess W.R."/>
            <person name="Johnson Z.I."/>
            <person name="Land M.L."/>
            <person name="Lindell D."/>
            <person name="Post A.F."/>
            <person name="Regala W."/>
            <person name="Shah M."/>
            <person name="Shaw S.L."/>
            <person name="Steglich C."/>
            <person name="Sullivan M.B."/>
            <person name="Ting C.S."/>
            <person name="Tolonen A."/>
            <person name="Webb E.A."/>
            <person name="Zinser E.R."/>
            <person name="Chisholm S.W."/>
        </authorList>
    </citation>
    <scope>NUCLEOTIDE SEQUENCE [LARGE SCALE GENOMIC DNA]</scope>
    <source>
        <strain>CCMP1986 / NIES-2087 / MED4</strain>
    </source>
</reference>
<proteinExistence type="inferred from homology"/>